<feature type="signal peptide" evidence="4">
    <location>
        <begin position="1"/>
        <end position="23"/>
    </location>
</feature>
<feature type="chain" id="PRO_0000036096" description="Urokinase plasminogen activator surface receptor">
    <location>
        <begin position="24"/>
        <end position="298" status="uncertain"/>
    </location>
</feature>
<feature type="propeptide" id="PRO_0000036097" description="Removed in mature form" evidence="4">
    <location>
        <begin position="299" status="uncertain"/>
        <end position="327"/>
    </location>
</feature>
<feature type="domain" description="UPAR/Ly6 1">
    <location>
        <begin position="24"/>
        <end position="117"/>
    </location>
</feature>
<feature type="domain" description="UPAR/Ly6 2">
    <location>
        <begin position="117"/>
        <end position="212"/>
    </location>
</feature>
<feature type="domain" description="UPAR/Ly6 3">
    <location>
        <begin position="213"/>
        <end position="298"/>
    </location>
</feature>
<feature type="lipid moiety-binding region" description="GPI-anchor amidated glycine" evidence="4">
    <location>
        <position position="298"/>
    </location>
</feature>
<feature type="glycosylation site" description="N-linked (GlcNAc...) asparagine" evidence="4">
    <location>
        <position position="32"/>
    </location>
</feature>
<feature type="glycosylation site" description="N-linked (GlcNAc...) asparagine" evidence="6">
    <location>
        <position position="75"/>
    </location>
</feature>
<feature type="glycosylation site" description="N-linked (GlcNAc...) asparagine" evidence="4">
    <location>
        <position position="183"/>
    </location>
</feature>
<feature type="glycosylation site" description="N-linked (GlcNAc...) asparagine" evidence="6">
    <location>
        <position position="193"/>
    </location>
</feature>
<feature type="glycosylation site" description="N-linked (GlcNAc...) asparagine" evidence="4">
    <location>
        <position position="221"/>
    </location>
</feature>
<feature type="glycosylation site" description="N-linked (GlcNAc...) asparagine" evidence="4">
    <location>
        <position position="254"/>
    </location>
</feature>
<feature type="glycosylation site" description="N-linked (GlcNAc...) asparagine" evidence="6">
    <location>
        <position position="282"/>
    </location>
</feature>
<feature type="disulfide bond" evidence="6">
    <location>
        <begin position="26"/>
        <end position="47"/>
    </location>
</feature>
<feature type="disulfide bond" evidence="6">
    <location>
        <begin position="29"/>
        <end position="35"/>
    </location>
</feature>
<feature type="disulfide bond" evidence="6">
    <location>
        <begin position="40"/>
        <end position="68"/>
    </location>
</feature>
<feature type="disulfide bond" evidence="6">
    <location>
        <begin position="94"/>
        <end position="99"/>
    </location>
</feature>
<feature type="disulfide bond" evidence="6">
    <location>
        <begin position="119"/>
        <end position="146"/>
    </location>
</feature>
<feature type="disulfide bond" evidence="6">
    <location>
        <begin position="122"/>
        <end position="129"/>
    </location>
</feature>
<feature type="disulfide bond" evidence="6">
    <location>
        <begin position="139"/>
        <end position="168"/>
    </location>
</feature>
<feature type="disulfide bond" evidence="6">
    <location>
        <begin position="174"/>
        <end position="191"/>
    </location>
</feature>
<feature type="disulfide bond" evidence="6">
    <location>
        <begin position="192"/>
        <end position="197"/>
    </location>
</feature>
<feature type="disulfide bond" evidence="6">
    <location>
        <begin position="215"/>
        <end position="243"/>
    </location>
</feature>
<feature type="disulfide bond" evidence="6">
    <location>
        <begin position="218"/>
        <end position="226"/>
    </location>
</feature>
<feature type="disulfide bond" evidence="6">
    <location>
        <begin position="236"/>
        <end position="262"/>
    </location>
</feature>
<feature type="disulfide bond" evidence="6">
    <location>
        <begin position="268"/>
        <end position="287"/>
    </location>
</feature>
<feature type="disulfide bond" evidence="6">
    <location>
        <begin position="288"/>
        <end position="293"/>
    </location>
</feature>
<feature type="splice variant" id="VSP_031837" description="In isoform 2." evidence="7">
    <original>RSLKDEDYTRGCGSLPGCPGTAGFHSNQTFHFLKCCNYTHCNGGPVLDLQSFPPNGFQCYSCEGNN</original>
    <variation>SKLPSAGQLLVEIFKSWEQSASKRQLNPHTVTGPTFSVTGSSGSLDQLGSDQEPSYLVMSRILLSF</variation>
    <location>
        <begin position="157"/>
        <end position="222"/>
    </location>
</feature>
<feature type="splice variant" id="VSP_031838" description="In isoform 2." evidence="7">
    <location>
        <begin position="223"/>
        <end position="327"/>
    </location>
</feature>
<feature type="strand" evidence="9">
    <location>
        <begin position="25"/>
        <end position="29"/>
    </location>
</feature>
<feature type="strand" evidence="9">
    <location>
        <begin position="36"/>
        <end position="39"/>
    </location>
</feature>
<feature type="strand" evidence="9">
    <location>
        <begin position="47"/>
        <end position="56"/>
    </location>
</feature>
<feature type="strand" evidence="9">
    <location>
        <begin position="61"/>
        <end position="68"/>
    </location>
</feature>
<feature type="strand" evidence="9">
    <location>
        <begin position="76"/>
        <end position="82"/>
    </location>
</feature>
<feature type="strand" evidence="9">
    <location>
        <begin position="85"/>
        <end position="91"/>
    </location>
</feature>
<feature type="strand" evidence="10">
    <location>
        <begin position="117"/>
        <end position="123"/>
    </location>
</feature>
<feature type="turn" evidence="9">
    <location>
        <begin position="124"/>
        <end position="127"/>
    </location>
</feature>
<feature type="turn" evidence="10">
    <location>
        <begin position="128"/>
        <end position="130"/>
    </location>
</feature>
<feature type="strand" evidence="10">
    <location>
        <begin position="131"/>
        <end position="133"/>
    </location>
</feature>
<feature type="strand" evidence="10">
    <location>
        <begin position="135"/>
        <end position="139"/>
    </location>
</feature>
<feature type="turn" evidence="10">
    <location>
        <begin position="141"/>
        <end position="143"/>
    </location>
</feature>
<feature type="strand" evidence="10">
    <location>
        <begin position="145"/>
        <end position="152"/>
    </location>
</feature>
<feature type="strand" evidence="10">
    <location>
        <begin position="163"/>
        <end position="169"/>
    </location>
</feature>
<feature type="strand" evidence="10">
    <location>
        <begin position="175"/>
        <end position="181"/>
    </location>
</feature>
<feature type="strand" evidence="10">
    <location>
        <begin position="186"/>
        <end position="192"/>
    </location>
</feature>
<feature type="turn" evidence="10">
    <location>
        <begin position="195"/>
        <end position="198"/>
    </location>
</feature>
<feature type="helix" evidence="10">
    <location>
        <begin position="205"/>
        <end position="207"/>
    </location>
</feature>
<feature type="strand" evidence="10">
    <location>
        <begin position="210"/>
        <end position="218"/>
    </location>
</feature>
<feature type="turn" evidence="10">
    <location>
        <begin position="228"/>
        <end position="230"/>
    </location>
</feature>
<feature type="strand" evidence="10">
    <location>
        <begin position="232"/>
        <end position="237"/>
    </location>
</feature>
<feature type="strand" evidence="10">
    <location>
        <begin position="242"/>
        <end position="249"/>
    </location>
</feature>
<feature type="strand" evidence="10">
    <location>
        <begin position="257"/>
        <end position="263"/>
    </location>
</feature>
<feature type="helix" evidence="10">
    <location>
        <begin position="265"/>
        <end position="269"/>
    </location>
</feature>
<feature type="turn" evidence="10">
    <location>
        <begin position="272"/>
        <end position="276"/>
    </location>
</feature>
<feature type="strand" evidence="10">
    <location>
        <begin position="277"/>
        <end position="280"/>
    </location>
</feature>
<feature type="strand" evidence="10">
    <location>
        <begin position="282"/>
        <end position="288"/>
    </location>
</feature>
<feature type="turn" evidence="10">
    <location>
        <begin position="291"/>
        <end position="294"/>
    </location>
</feature>
<organism>
    <name type="scientific">Mus musculus</name>
    <name type="common">Mouse</name>
    <dbReference type="NCBI Taxonomy" id="10090"/>
    <lineage>
        <taxon>Eukaryota</taxon>
        <taxon>Metazoa</taxon>
        <taxon>Chordata</taxon>
        <taxon>Craniata</taxon>
        <taxon>Vertebrata</taxon>
        <taxon>Euteleostomi</taxon>
        <taxon>Mammalia</taxon>
        <taxon>Eutheria</taxon>
        <taxon>Euarchontoglires</taxon>
        <taxon>Glires</taxon>
        <taxon>Rodentia</taxon>
        <taxon>Myomorpha</taxon>
        <taxon>Muroidea</taxon>
        <taxon>Muridae</taxon>
        <taxon>Murinae</taxon>
        <taxon>Mus</taxon>
        <taxon>Mus</taxon>
    </lineage>
</organism>
<comment type="function">
    <text>Acts as a receptor for urokinase plasminogen activator. Plays a role in localizing and promoting plasmin formation. Mediates the proteolysis-independent signal transduction activation effects of U-PA.</text>
</comment>
<comment type="subunit">
    <text evidence="1 3 8">Monomer (Probable). Interacts (via the UPAR/Ly6 domains) with SRPX2. Interacts with MRC2 (By similarity). Interacts with SORL1 (via N-terminal ectodomain); this interaction decreases PLAUR internalization (By similarity). The ternary complex composed of PLAUR-PLAU-SERPINE1 also interacts with SORL1 (By similarity). Interacts with CD82; this interaction prevents PLAUR from binding to its high affinity ligand PLAU (By similarity).</text>
</comment>
<comment type="subcellular location">
    <molecule>Isoform 1</molecule>
    <subcellularLocation>
        <location evidence="2">Cell membrane</location>
        <topology evidence="2">Lipid-anchor</topology>
        <topology evidence="2">GPI-anchor</topology>
    </subcellularLocation>
</comment>
<comment type="subcellular location">
    <molecule>Isoform 2</molecule>
    <subcellularLocation>
        <location evidence="2">Secreted</location>
    </subcellularLocation>
</comment>
<comment type="alternative products">
    <event type="alternative splicing"/>
    <isoform>
        <id>P35456-1</id>
        <name>1</name>
        <name>GPI-anchored</name>
        <sequence type="displayed"/>
    </isoform>
    <isoform>
        <id>P35456-2</id>
        <id>P35457-1</id>
        <name>2</name>
        <name>Secreted</name>
        <sequence type="described" ref="VSP_031837 VSP_031838"/>
    </isoform>
</comment>
<comment type="tissue specificity">
    <text evidence="5">Expressed in angiogenic endothelial cells (at protein level).</text>
</comment>
<comment type="miscellaneous">
    <molecule>Isoform 1</molecule>
    <text>GPI-anchored form.</text>
</comment>
<accession>P35456</accession>
<accession>P35457</accession>
<proteinExistence type="evidence at protein level"/>
<sequence>MGLPRRLLLLLLLATTCVPASQGLQCMQCESNQSCLVEECALGQDLCRTTVLREWQDDRELEVVTRGCAHSEKTNRTMSYRMGSMIISLTETVCATNLCNRPRPGARGRAFPQGRYLECASCTSLDQSCERGREQSLQCRYPTEHCIEVVTLQSTERSLKDEDYTRGCGSLPGCPGTAGFHSNQTFHFLKCCNYTHCNGGPVLDLQSFPPNGFQCYSCEGNNTLGCSSEEASLINCRGPMNQCLVATGLDVLGNRSYTVRGCATASWCQGSHVADSFPTHLNVSVSCCHGSGCNSPTGGAPRPGPAQLSLIASLLLTLGLWGVLLWT</sequence>
<name>UPAR_MOUSE</name>
<evidence type="ECO:0000250" key="1"/>
<evidence type="ECO:0000250" key="2">
    <source>
        <dbReference type="UniProtKB" id="P49616"/>
    </source>
</evidence>
<evidence type="ECO:0000250" key="3">
    <source>
        <dbReference type="UniProtKB" id="Q03405"/>
    </source>
</evidence>
<evidence type="ECO:0000255" key="4"/>
<evidence type="ECO:0000269" key="5">
    <source>
    </source>
</evidence>
<evidence type="ECO:0000269" key="6">
    <source>
    </source>
</evidence>
<evidence type="ECO:0000303" key="7">
    <source>
    </source>
</evidence>
<evidence type="ECO:0000305" key="8"/>
<evidence type="ECO:0007829" key="9">
    <source>
        <dbReference type="PDB" id="3LAQ"/>
    </source>
</evidence>
<evidence type="ECO:0007829" key="10">
    <source>
        <dbReference type="PDB" id="6AEX"/>
    </source>
</evidence>
<reference key="1">
    <citation type="journal article" date="1991" name="J. Cell Biol.">
        <title>Two alternatively spliced mouse urokinase receptor mRNAs with different histological localization in the gastrointestinal tract.</title>
        <authorList>
            <person name="Kristensen P."/>
            <person name="Eriksen J."/>
            <person name="Blasi F."/>
            <person name="Danoe K."/>
        </authorList>
    </citation>
    <scope>NUCLEOTIDE SEQUENCE [MRNA] (ISOFORMS 1 AND 2)</scope>
    <scope>ALTERNATIVE SPLICING</scope>
    <source>
        <tissue>Macrophage</tissue>
    </source>
</reference>
<reference key="2">
    <citation type="journal article" date="1994" name="J. Biol. Chem.">
        <title>The murine urokinase-type plasminogen activator receptor gene.</title>
        <authorList>
            <person name="Suh T.T."/>
            <person name="Nerlov C."/>
            <person name="Dano K."/>
            <person name="Degen J.L."/>
        </authorList>
    </citation>
    <scope>NUCLEOTIDE SEQUENCE [GENOMIC DNA]</scope>
</reference>
<reference key="3">
    <citation type="journal article" date="2009" name="FASEB J.">
        <title>Sushi repeat protein X-linked 2, a novel mediator of angiogenesis.</title>
        <authorList>
            <person name="Miljkovic-Licina M."/>
            <person name="Hammel P."/>
            <person name="Garrido-Urbani S."/>
            <person name="Bradfield P.F."/>
            <person name="Szepetowski P."/>
            <person name="Imhof B.A."/>
        </authorList>
    </citation>
    <scope>INTERACTION WITH SRPX2</scope>
    <scope>TISSUE SPECIFICITY</scope>
</reference>
<reference key="4">
    <citation type="journal article" date="2010" name="Cell">
        <title>A tissue-specific atlas of mouse protein phosphorylation and expression.</title>
        <authorList>
            <person name="Huttlin E.L."/>
            <person name="Jedrychowski M.P."/>
            <person name="Elias J.E."/>
            <person name="Goswami T."/>
            <person name="Rad R."/>
            <person name="Beausoleil S.A."/>
            <person name="Villen J."/>
            <person name="Haas W."/>
            <person name="Sowa M.E."/>
            <person name="Gygi S.P."/>
        </authorList>
    </citation>
    <scope>IDENTIFICATION BY MASS SPECTROMETRY [LARGE SCALE ANALYSIS]</scope>
    <source>
        <tissue>Lung</tissue>
    </source>
</reference>
<reference key="5">
    <citation type="journal article" date="2010" name="J. Biol. Chem.">
        <title>Structure-based engineering of species selectivity in the interaction between urokinase and its receptor: implication for preclinical cancer therapy.</title>
        <authorList>
            <person name="Lin L."/>
            <person name="Gardsvoll H."/>
            <person name="Huai Q."/>
            <person name="Huang M."/>
            <person name="Ploug M."/>
        </authorList>
    </citation>
    <scope>X-RAY CRYSTALLOGRAPHY (3.2 ANGSTROMS) OF 24-300 IN COMPLEX WITH PLAU</scope>
    <scope>DISULFIDE BONDS</scope>
    <scope>GLYCOSYLATION AT ASN-75; ASN-193 AND ASN-282</scope>
</reference>
<dbReference type="EMBL" id="X62700">
    <property type="protein sequence ID" value="CAA44574.1"/>
    <property type="molecule type" value="mRNA"/>
</dbReference>
<dbReference type="EMBL" id="X62701">
    <property type="protein sequence ID" value="CAA44575.1"/>
    <property type="molecule type" value="mRNA"/>
</dbReference>
<dbReference type="EMBL" id="U12235">
    <property type="protein sequence ID" value="AAB60484.1"/>
    <property type="molecule type" value="Genomic_DNA"/>
</dbReference>
<dbReference type="CCDS" id="CCDS20950.1">
    <molecule id="P35456-1"/>
</dbReference>
<dbReference type="PIR" id="A55356">
    <property type="entry name" value="A55356"/>
</dbReference>
<dbReference type="PIR" id="B41643">
    <property type="entry name" value="B41643"/>
</dbReference>
<dbReference type="RefSeq" id="NP_035243.1">
    <molecule id="P35456-1"/>
    <property type="nucleotide sequence ID" value="NM_011113.4"/>
</dbReference>
<dbReference type="RefSeq" id="XP_006539702.1">
    <property type="nucleotide sequence ID" value="XM_006539639.3"/>
</dbReference>
<dbReference type="RefSeq" id="XP_006539703.1">
    <property type="nucleotide sequence ID" value="XM_006539640.3"/>
</dbReference>
<dbReference type="PDB" id="3LAQ">
    <property type="method" value="X-ray"/>
    <property type="resolution" value="3.20 A"/>
    <property type="chains" value="U/V=24-300"/>
</dbReference>
<dbReference type="PDB" id="6AEX">
    <property type="method" value="X-ray"/>
    <property type="resolution" value="2.39 A"/>
    <property type="chains" value="U=24-300"/>
</dbReference>
<dbReference type="PDBsum" id="3LAQ"/>
<dbReference type="PDBsum" id="6AEX"/>
<dbReference type="SMR" id="P35456"/>
<dbReference type="ComplexPortal" id="CPX-510">
    <property type="entry name" value="uPA-uPAR complex"/>
</dbReference>
<dbReference type="ComplexPortal" id="CPX-526">
    <property type="entry name" value="uPA-uPAR-vitronectin complex"/>
</dbReference>
<dbReference type="CORUM" id="P35456"/>
<dbReference type="FunCoup" id="P35456">
    <property type="interactions" value="45"/>
</dbReference>
<dbReference type="IntAct" id="P35456">
    <property type="interactions" value="1"/>
</dbReference>
<dbReference type="STRING" id="10090.ENSMUSP00000002284"/>
<dbReference type="GlyCosmos" id="P35456">
    <property type="glycosylation" value="7 sites, No reported glycans"/>
</dbReference>
<dbReference type="GlyGen" id="P35456">
    <property type="glycosylation" value="7 sites"/>
</dbReference>
<dbReference type="iPTMnet" id="P35456"/>
<dbReference type="PhosphoSitePlus" id="P35456"/>
<dbReference type="SwissPalm" id="P35456"/>
<dbReference type="PaxDb" id="10090-ENSMUSP00000002284"/>
<dbReference type="PeptideAtlas" id="P35456"/>
<dbReference type="ProteomicsDB" id="300097">
    <molecule id="P35456-1"/>
</dbReference>
<dbReference type="ProteomicsDB" id="300098">
    <molecule id="P35456-2"/>
</dbReference>
<dbReference type="Antibodypedia" id="31096">
    <property type="antibodies" value="663 antibodies from 42 providers"/>
</dbReference>
<dbReference type="DNASU" id="18793"/>
<dbReference type="Ensembl" id="ENSMUST00000002284.11">
    <molecule id="P35456-1"/>
    <property type="protein sequence ID" value="ENSMUSP00000002284.10"/>
    <property type="gene ID" value="ENSMUSG00000046223.11"/>
</dbReference>
<dbReference type="GeneID" id="18793"/>
<dbReference type="KEGG" id="mmu:18793"/>
<dbReference type="UCSC" id="uc009fpr.1">
    <molecule id="P35456-1"/>
    <property type="organism name" value="mouse"/>
</dbReference>
<dbReference type="AGR" id="MGI:97612"/>
<dbReference type="CTD" id="5329"/>
<dbReference type="MGI" id="MGI:97612">
    <property type="gene designation" value="Plaur"/>
</dbReference>
<dbReference type="VEuPathDB" id="HostDB:ENSMUSG00000046223"/>
<dbReference type="eggNOG" id="ENOG502S36D">
    <property type="taxonomic scope" value="Eukaryota"/>
</dbReference>
<dbReference type="GeneTree" id="ENSGT00940000153599"/>
<dbReference type="HOGENOM" id="CLU_072612_0_0_1"/>
<dbReference type="InParanoid" id="P35456"/>
<dbReference type="OMA" id="TGNGCNH"/>
<dbReference type="OrthoDB" id="5945173at2759"/>
<dbReference type="PhylomeDB" id="P35456"/>
<dbReference type="TreeFam" id="TF338662"/>
<dbReference type="Reactome" id="R-MMU-162791">
    <property type="pathway name" value="Attachment of GPI anchor to uPAR"/>
</dbReference>
<dbReference type="Reactome" id="R-MMU-6798695">
    <property type="pathway name" value="Neutrophil degranulation"/>
</dbReference>
<dbReference type="Reactome" id="R-MMU-75205">
    <property type="pathway name" value="Dissolution of Fibrin Clot"/>
</dbReference>
<dbReference type="BioGRID-ORCS" id="18793">
    <property type="hits" value="2 hits in 79 CRISPR screens"/>
</dbReference>
<dbReference type="EvolutionaryTrace" id="P35456"/>
<dbReference type="PRO" id="PR:P35456"/>
<dbReference type="Proteomes" id="UP000000589">
    <property type="component" value="Chromosome 7"/>
</dbReference>
<dbReference type="RNAct" id="P35456">
    <property type="molecule type" value="protein"/>
</dbReference>
<dbReference type="Bgee" id="ENSMUSG00000046223">
    <property type="expression patterns" value="Expressed in granulocyte and 135 other cell types or tissues"/>
</dbReference>
<dbReference type="ExpressionAtlas" id="P35456">
    <property type="expression patterns" value="baseline and differential"/>
</dbReference>
<dbReference type="GO" id="GO:0009897">
    <property type="term" value="C:external side of plasma membrane"/>
    <property type="evidence" value="ECO:0000303"/>
    <property type="project" value="ComplexPortal"/>
</dbReference>
<dbReference type="GO" id="GO:0005576">
    <property type="term" value="C:extracellular region"/>
    <property type="evidence" value="ECO:0007669"/>
    <property type="project" value="UniProtKB-SubCell"/>
</dbReference>
<dbReference type="GO" id="GO:0005886">
    <property type="term" value="C:plasma membrane"/>
    <property type="evidence" value="ECO:0000314"/>
    <property type="project" value="MGI"/>
</dbReference>
<dbReference type="GO" id="GO:0098637">
    <property type="term" value="C:protein complex involved in cell-matrix adhesion"/>
    <property type="evidence" value="ECO:0000266"/>
    <property type="project" value="ComplexPortal"/>
</dbReference>
<dbReference type="GO" id="GO:1905370">
    <property type="term" value="C:serine-type endopeptidase complex"/>
    <property type="evidence" value="ECO:0000353"/>
    <property type="project" value="ComplexPortal"/>
</dbReference>
<dbReference type="GO" id="GO:0019899">
    <property type="term" value="F:enzyme binding"/>
    <property type="evidence" value="ECO:0007669"/>
    <property type="project" value="Ensembl"/>
</dbReference>
<dbReference type="GO" id="GO:0019904">
    <property type="term" value="F:protein domain specific binding"/>
    <property type="evidence" value="ECO:0007669"/>
    <property type="project" value="Ensembl"/>
</dbReference>
<dbReference type="GO" id="GO:0005102">
    <property type="term" value="F:signaling receptor binding"/>
    <property type="evidence" value="ECO:0007669"/>
    <property type="project" value="Ensembl"/>
</dbReference>
<dbReference type="GO" id="GO:2001243">
    <property type="term" value="P:negative regulation of intrinsic apoptotic signaling pathway"/>
    <property type="evidence" value="ECO:0007669"/>
    <property type="project" value="Ensembl"/>
</dbReference>
<dbReference type="GO" id="GO:0045742">
    <property type="term" value="P:positive regulation of epidermal growth factor receptor signaling pathway"/>
    <property type="evidence" value="ECO:0007669"/>
    <property type="project" value="Ensembl"/>
</dbReference>
<dbReference type="GO" id="GO:0034112">
    <property type="term" value="P:positive regulation of homotypic cell-cell adhesion"/>
    <property type="evidence" value="ECO:0007669"/>
    <property type="project" value="Ensembl"/>
</dbReference>
<dbReference type="GO" id="GO:0090200">
    <property type="term" value="P:positive regulation of release of cytochrome c from mitochondria"/>
    <property type="evidence" value="ECO:0007669"/>
    <property type="project" value="Ensembl"/>
</dbReference>
<dbReference type="GO" id="GO:0030155">
    <property type="term" value="P:regulation of cell adhesion"/>
    <property type="evidence" value="ECO:0000266"/>
    <property type="project" value="ComplexPortal"/>
</dbReference>
<dbReference type="GO" id="GO:0051917">
    <property type="term" value="P:regulation of fibrinolysis"/>
    <property type="evidence" value="ECO:0000303"/>
    <property type="project" value="ComplexPortal"/>
</dbReference>
<dbReference type="GO" id="GO:0010755">
    <property type="term" value="P:regulation of plasminogen activation"/>
    <property type="evidence" value="ECO:0000303"/>
    <property type="project" value="ComplexPortal"/>
</dbReference>
<dbReference type="GO" id="GO:0038195">
    <property type="term" value="P:urokinase plasminogen activator signaling pathway"/>
    <property type="evidence" value="ECO:0000303"/>
    <property type="project" value="ComplexPortal"/>
</dbReference>
<dbReference type="CDD" id="cd23556">
    <property type="entry name" value="TFP_LU_ECD_uPAR_rpt1"/>
    <property type="match status" value="1"/>
</dbReference>
<dbReference type="CDD" id="cd23557">
    <property type="entry name" value="TFP_LU_ECD_uPAR_rpt2"/>
    <property type="match status" value="1"/>
</dbReference>
<dbReference type="CDD" id="cd23558">
    <property type="entry name" value="TFP_LU_ECD_uPAR_rpt3"/>
    <property type="match status" value="1"/>
</dbReference>
<dbReference type="FunFam" id="2.10.60.10:FF:000013">
    <property type="entry name" value="Urokinase plasminogen activator surface receptor"/>
    <property type="match status" value="1"/>
</dbReference>
<dbReference type="FunFam" id="2.10.60.10:FF:000015">
    <property type="entry name" value="Urokinase plasminogen activator surface receptor"/>
    <property type="match status" value="1"/>
</dbReference>
<dbReference type="FunFam" id="2.10.60.10:FF:000019">
    <property type="entry name" value="Urokinase plasminogen activator surface receptor"/>
    <property type="match status" value="1"/>
</dbReference>
<dbReference type="Gene3D" id="2.10.60.10">
    <property type="entry name" value="CD59"/>
    <property type="match status" value="3"/>
</dbReference>
<dbReference type="InterPro" id="IPR018363">
    <property type="entry name" value="CD59_antigen_CS"/>
</dbReference>
<dbReference type="InterPro" id="IPR016054">
    <property type="entry name" value="LY6_UPA_recep-like"/>
</dbReference>
<dbReference type="InterPro" id="IPR045860">
    <property type="entry name" value="Snake_toxin-like_sf"/>
</dbReference>
<dbReference type="PANTHER" id="PTHR10624:SF6">
    <property type="entry name" value="UROKINASE PLASMINOGEN ACTIVATOR SURFACE RECEPTOR"/>
    <property type="match status" value="1"/>
</dbReference>
<dbReference type="PANTHER" id="PTHR10624">
    <property type="entry name" value="UROKINASE PLASMINOGEN ACTIVATOR SURFACE RECEPTOR-RELATED"/>
    <property type="match status" value="1"/>
</dbReference>
<dbReference type="Pfam" id="PF00021">
    <property type="entry name" value="UPAR_LY6"/>
    <property type="match status" value="3"/>
</dbReference>
<dbReference type="SMART" id="SM00134">
    <property type="entry name" value="LU"/>
    <property type="match status" value="3"/>
</dbReference>
<dbReference type="SUPFAM" id="SSF57302">
    <property type="entry name" value="Snake toxin-like"/>
    <property type="match status" value="3"/>
</dbReference>
<dbReference type="PROSITE" id="PS00983">
    <property type="entry name" value="LY6_UPAR"/>
    <property type="match status" value="3"/>
</dbReference>
<gene>
    <name type="primary">Plaur</name>
</gene>
<keyword id="KW-0002">3D-structure</keyword>
<keyword id="KW-0025">Alternative splicing</keyword>
<keyword id="KW-1003">Cell membrane</keyword>
<keyword id="KW-1015">Disulfide bond</keyword>
<keyword id="KW-0325">Glycoprotein</keyword>
<keyword id="KW-0336">GPI-anchor</keyword>
<keyword id="KW-0449">Lipoprotein</keyword>
<keyword id="KW-0472">Membrane</keyword>
<keyword id="KW-0675">Receptor</keyword>
<keyword id="KW-1185">Reference proteome</keyword>
<keyword id="KW-0677">Repeat</keyword>
<keyword id="KW-0964">Secreted</keyword>
<keyword id="KW-0732">Signal</keyword>
<protein>
    <recommendedName>
        <fullName>Urokinase plasminogen activator surface receptor</fullName>
        <shortName>U-PAR</shortName>
        <shortName>uPAR</shortName>
    </recommendedName>
    <cdAntigenName>CD87</cdAntigenName>
</protein>